<evidence type="ECO:0000255" key="1">
    <source>
        <dbReference type="HAMAP-Rule" id="MF_00195"/>
    </source>
</evidence>
<reference key="1">
    <citation type="journal article" date="2009" name="J. Bacteriol.">
        <title>Genome sequences of three Agrobacterium biovars help elucidate the evolution of multichromosome genomes in bacteria.</title>
        <authorList>
            <person name="Slater S.C."/>
            <person name="Goldman B.S."/>
            <person name="Goodner B."/>
            <person name="Setubal J.C."/>
            <person name="Farrand S.K."/>
            <person name="Nester E.W."/>
            <person name="Burr T.J."/>
            <person name="Banta L."/>
            <person name="Dickerman A.W."/>
            <person name="Paulsen I."/>
            <person name="Otten L."/>
            <person name="Suen G."/>
            <person name="Welch R."/>
            <person name="Almeida N.F."/>
            <person name="Arnold F."/>
            <person name="Burton O.T."/>
            <person name="Du Z."/>
            <person name="Ewing A."/>
            <person name="Godsy E."/>
            <person name="Heisel S."/>
            <person name="Houmiel K.L."/>
            <person name="Jhaveri J."/>
            <person name="Lu J."/>
            <person name="Miller N.M."/>
            <person name="Norton S."/>
            <person name="Chen Q."/>
            <person name="Phoolcharoen W."/>
            <person name="Ohlin V."/>
            <person name="Ondrusek D."/>
            <person name="Pride N."/>
            <person name="Stricklin S.L."/>
            <person name="Sun J."/>
            <person name="Wheeler C."/>
            <person name="Wilson L."/>
            <person name="Zhu H."/>
            <person name="Wood D.W."/>
        </authorList>
    </citation>
    <scope>NUCLEOTIDE SEQUENCE [LARGE SCALE GENOMIC DNA]</scope>
    <source>
        <strain>ATCC BAA-846 / DSM 112012 / S4</strain>
    </source>
</reference>
<sequence length="474" mass="52746">MSFTVAIVGRPNVGKSTLFNRLVGKKLALVDDTPGVTRDRRPGEAKLVDLRFHIVDTAGLEEAGADTLEGRMRAQTEIAIDEADLSLFVVDAKMGLTHVDKALADMLRKRGKPVVLVANKSEARGSDGGFYDAFTLGLGEPVPISAEHGQGMIDLRDAIVEAIGVDRAFPEDDDDVAETDIVLRPTVEGEDDEEDLAYDDTKPLRVAIVGRPNAGKSTLINRFLGEDRLLTGPEAGITRDSISVEWDWRGRTIKMFDTAGMRRKARVIEKLEKLSVADTLRAIRFAETVVIVFDATIPFEKQDIQIVDLVLREGRAAVLAFNKWDLVEDPQAVLAELREKTERLLPQARGIRAVPMAGQTGYGLEKLMQSIIDTDMVWNKRISTAKLNRWLDSVQTQHPPPAVSGRRLKLKYMTQVKARPPAFMISCTRPDSVPESYIRYLTNGLRADFNMPGVPIRIHLKASENPFENKRKRR</sequence>
<keyword id="KW-0342">GTP-binding</keyword>
<keyword id="KW-0547">Nucleotide-binding</keyword>
<keyword id="KW-1185">Reference proteome</keyword>
<keyword id="KW-0677">Repeat</keyword>
<keyword id="KW-0690">Ribosome biogenesis</keyword>
<proteinExistence type="inferred from homology"/>
<organism>
    <name type="scientific">Allorhizobium ampelinum (strain ATCC BAA-846 / DSM 112012 / S4)</name>
    <name type="common">Agrobacterium vitis (strain S4)</name>
    <dbReference type="NCBI Taxonomy" id="311402"/>
    <lineage>
        <taxon>Bacteria</taxon>
        <taxon>Pseudomonadati</taxon>
        <taxon>Pseudomonadota</taxon>
        <taxon>Alphaproteobacteria</taxon>
        <taxon>Hyphomicrobiales</taxon>
        <taxon>Rhizobiaceae</taxon>
        <taxon>Rhizobium/Agrobacterium group</taxon>
        <taxon>Allorhizobium</taxon>
        <taxon>Allorhizobium ampelinum</taxon>
    </lineage>
</organism>
<feature type="chain" id="PRO_1000124337" description="GTPase Der">
    <location>
        <begin position="1"/>
        <end position="474"/>
    </location>
</feature>
<feature type="domain" description="EngA-type G 1">
    <location>
        <begin position="3"/>
        <end position="167"/>
    </location>
</feature>
<feature type="domain" description="EngA-type G 2">
    <location>
        <begin position="204"/>
        <end position="379"/>
    </location>
</feature>
<feature type="domain" description="KH-like" evidence="1">
    <location>
        <begin position="380"/>
        <end position="464"/>
    </location>
</feature>
<feature type="binding site" evidence="1">
    <location>
        <begin position="9"/>
        <end position="16"/>
    </location>
    <ligand>
        <name>GTP</name>
        <dbReference type="ChEBI" id="CHEBI:37565"/>
        <label>1</label>
    </ligand>
</feature>
<feature type="binding site" evidence="1">
    <location>
        <begin position="56"/>
        <end position="60"/>
    </location>
    <ligand>
        <name>GTP</name>
        <dbReference type="ChEBI" id="CHEBI:37565"/>
        <label>1</label>
    </ligand>
</feature>
<feature type="binding site" evidence="1">
    <location>
        <begin position="119"/>
        <end position="122"/>
    </location>
    <ligand>
        <name>GTP</name>
        <dbReference type="ChEBI" id="CHEBI:37565"/>
        <label>1</label>
    </ligand>
</feature>
<feature type="binding site" evidence="1">
    <location>
        <begin position="210"/>
        <end position="217"/>
    </location>
    <ligand>
        <name>GTP</name>
        <dbReference type="ChEBI" id="CHEBI:37565"/>
        <label>2</label>
    </ligand>
</feature>
<feature type="binding site" evidence="1">
    <location>
        <begin position="257"/>
        <end position="261"/>
    </location>
    <ligand>
        <name>GTP</name>
        <dbReference type="ChEBI" id="CHEBI:37565"/>
        <label>2</label>
    </ligand>
</feature>
<feature type="binding site" evidence="1">
    <location>
        <begin position="322"/>
        <end position="325"/>
    </location>
    <ligand>
        <name>GTP</name>
        <dbReference type="ChEBI" id="CHEBI:37565"/>
        <label>2</label>
    </ligand>
</feature>
<comment type="function">
    <text evidence="1">GTPase that plays an essential role in the late steps of ribosome biogenesis.</text>
</comment>
<comment type="subunit">
    <text evidence="1">Associates with the 50S ribosomal subunit.</text>
</comment>
<comment type="similarity">
    <text evidence="1">Belongs to the TRAFAC class TrmE-Era-EngA-EngB-Septin-like GTPase superfamily. EngA (Der) GTPase family.</text>
</comment>
<accession>B9JZQ5</accession>
<name>DER_ALLAM</name>
<dbReference type="EMBL" id="CP000633">
    <property type="protein sequence ID" value="ACM37365.1"/>
    <property type="molecule type" value="Genomic_DNA"/>
</dbReference>
<dbReference type="RefSeq" id="WP_015916784.1">
    <property type="nucleotide sequence ID" value="NC_011989.1"/>
</dbReference>
<dbReference type="SMR" id="B9JZQ5"/>
<dbReference type="STRING" id="311402.Avi_3302"/>
<dbReference type="GeneID" id="60684401"/>
<dbReference type="KEGG" id="avi:Avi_3302"/>
<dbReference type="eggNOG" id="COG1160">
    <property type="taxonomic scope" value="Bacteria"/>
</dbReference>
<dbReference type="HOGENOM" id="CLU_016077_5_0_5"/>
<dbReference type="Proteomes" id="UP000001596">
    <property type="component" value="Chromosome 1"/>
</dbReference>
<dbReference type="GO" id="GO:0005525">
    <property type="term" value="F:GTP binding"/>
    <property type="evidence" value="ECO:0007669"/>
    <property type="project" value="UniProtKB-UniRule"/>
</dbReference>
<dbReference type="GO" id="GO:0042254">
    <property type="term" value="P:ribosome biogenesis"/>
    <property type="evidence" value="ECO:0007669"/>
    <property type="project" value="UniProtKB-KW"/>
</dbReference>
<dbReference type="CDD" id="cd01894">
    <property type="entry name" value="EngA1"/>
    <property type="match status" value="1"/>
</dbReference>
<dbReference type="CDD" id="cd01895">
    <property type="entry name" value="EngA2"/>
    <property type="match status" value="1"/>
</dbReference>
<dbReference type="FunFam" id="3.30.300.20:FF:000004">
    <property type="entry name" value="GTPase Der"/>
    <property type="match status" value="1"/>
</dbReference>
<dbReference type="FunFam" id="3.40.50.300:FF:000057">
    <property type="entry name" value="GTPase Der"/>
    <property type="match status" value="1"/>
</dbReference>
<dbReference type="Gene3D" id="3.30.300.20">
    <property type="match status" value="1"/>
</dbReference>
<dbReference type="Gene3D" id="3.40.50.300">
    <property type="entry name" value="P-loop containing nucleotide triphosphate hydrolases"/>
    <property type="match status" value="2"/>
</dbReference>
<dbReference type="HAMAP" id="MF_00195">
    <property type="entry name" value="GTPase_Der"/>
    <property type="match status" value="1"/>
</dbReference>
<dbReference type="InterPro" id="IPR031166">
    <property type="entry name" value="G_ENGA"/>
</dbReference>
<dbReference type="InterPro" id="IPR006073">
    <property type="entry name" value="GTP-bd"/>
</dbReference>
<dbReference type="InterPro" id="IPR016484">
    <property type="entry name" value="GTPase_Der"/>
</dbReference>
<dbReference type="InterPro" id="IPR032859">
    <property type="entry name" value="KH_dom-like"/>
</dbReference>
<dbReference type="InterPro" id="IPR015946">
    <property type="entry name" value="KH_dom-like_a/b"/>
</dbReference>
<dbReference type="InterPro" id="IPR027417">
    <property type="entry name" value="P-loop_NTPase"/>
</dbReference>
<dbReference type="InterPro" id="IPR005225">
    <property type="entry name" value="Small_GTP-bd"/>
</dbReference>
<dbReference type="NCBIfam" id="TIGR03594">
    <property type="entry name" value="GTPase_EngA"/>
    <property type="match status" value="1"/>
</dbReference>
<dbReference type="NCBIfam" id="TIGR00231">
    <property type="entry name" value="small_GTP"/>
    <property type="match status" value="2"/>
</dbReference>
<dbReference type="PANTHER" id="PTHR43834">
    <property type="entry name" value="GTPASE DER"/>
    <property type="match status" value="1"/>
</dbReference>
<dbReference type="PANTHER" id="PTHR43834:SF6">
    <property type="entry name" value="GTPASE DER"/>
    <property type="match status" value="1"/>
</dbReference>
<dbReference type="Pfam" id="PF14714">
    <property type="entry name" value="KH_dom-like"/>
    <property type="match status" value="1"/>
</dbReference>
<dbReference type="Pfam" id="PF01926">
    <property type="entry name" value="MMR_HSR1"/>
    <property type="match status" value="2"/>
</dbReference>
<dbReference type="PIRSF" id="PIRSF006485">
    <property type="entry name" value="GTP-binding_EngA"/>
    <property type="match status" value="1"/>
</dbReference>
<dbReference type="PRINTS" id="PR00326">
    <property type="entry name" value="GTP1OBG"/>
</dbReference>
<dbReference type="SUPFAM" id="SSF52540">
    <property type="entry name" value="P-loop containing nucleoside triphosphate hydrolases"/>
    <property type="match status" value="2"/>
</dbReference>
<dbReference type="PROSITE" id="PS51712">
    <property type="entry name" value="G_ENGA"/>
    <property type="match status" value="2"/>
</dbReference>
<protein>
    <recommendedName>
        <fullName evidence="1">GTPase Der</fullName>
    </recommendedName>
    <alternativeName>
        <fullName evidence="1">GTP-binding protein EngA</fullName>
    </alternativeName>
</protein>
<gene>
    <name evidence="1" type="primary">der</name>
    <name type="synonym">engA</name>
    <name type="ordered locus">Avi_3302</name>
</gene>